<comment type="catalytic activity">
    <reaction evidence="1">
        <text>(S)-malate + a quinone = a quinol + oxaloacetate</text>
        <dbReference type="Rhea" id="RHEA:46012"/>
        <dbReference type="ChEBI" id="CHEBI:15589"/>
        <dbReference type="ChEBI" id="CHEBI:16452"/>
        <dbReference type="ChEBI" id="CHEBI:24646"/>
        <dbReference type="ChEBI" id="CHEBI:132124"/>
        <dbReference type="EC" id="1.1.5.4"/>
    </reaction>
</comment>
<comment type="cofactor">
    <cofactor evidence="1">
        <name>FAD</name>
        <dbReference type="ChEBI" id="CHEBI:57692"/>
    </cofactor>
</comment>
<comment type="pathway">
    <text evidence="1">Carbohydrate metabolism; tricarboxylic acid cycle; oxaloacetate from (S)-malate (quinone route): step 1/1.</text>
</comment>
<comment type="similarity">
    <text evidence="1">Belongs to the MQO family.</text>
</comment>
<name>MQO_PECCP</name>
<protein>
    <recommendedName>
        <fullName evidence="1">Probable malate:quinone oxidoreductase</fullName>
        <ecNumber evidence="1">1.1.5.4</ecNumber>
    </recommendedName>
    <alternativeName>
        <fullName evidence="1">MQO</fullName>
    </alternativeName>
    <alternativeName>
        <fullName evidence="1">Malate dehydrogenase [quinone]</fullName>
    </alternativeName>
</protein>
<sequence length="527" mass="58178">MKKLLAMFFCLTVVVNAPLAMAEDAKTTEKTTDVVLIGGGIMSSTLGVYLQELQPDWSIDMVERMDNVAEESSNGWNNAGTGHSAFMELNYTPDNPDGPINISKALEITEAFEVSRQFWSYQVKNGVLNNPHSFINSVPHISFVWGDENTAFLKHRYDAMQHSTLYRGMEFSDDPNTIKEWAPLVMEGRDPAQKIAATRMPIGTDVNYGEITRQLVDAMKTKSNFALHLNSEVRDIKRNADNTWSVTYADLKNGEKESVIKAKFVFIGAGGAALQLLQKTGIPEADLYGGFPVGGEFLVTENPEIVKRHMAKVYGKASVGAPPMSVPHLDTRIFDGKPVLLFGPFATFSSKFLKNGSLWDLIGSVTFSNVMPMTHVGLDNFDLVKYLIGQVMMDDDDRFASLKEYFPNAKKEDWRLTVAGQRVQIIKKDDDKGGVLKLGTEIVSSQDGSIAALLGASPGASTAAPIMLSLLEKVFKDKVATPEWQSKLKEIVPSYGQKLDGNIEMTNKIRSYTSSTLGLDYIEVKPE</sequence>
<gene>
    <name evidence="1" type="primary">mqo</name>
    <name type="ordered locus">PC1_2825</name>
</gene>
<organism>
    <name type="scientific">Pectobacterium carotovorum subsp. carotovorum (strain PC1)</name>
    <dbReference type="NCBI Taxonomy" id="561230"/>
    <lineage>
        <taxon>Bacteria</taxon>
        <taxon>Pseudomonadati</taxon>
        <taxon>Pseudomonadota</taxon>
        <taxon>Gammaproteobacteria</taxon>
        <taxon>Enterobacterales</taxon>
        <taxon>Pectobacteriaceae</taxon>
        <taxon>Pectobacterium</taxon>
    </lineage>
</organism>
<feature type="chain" id="PRO_1000204202" description="Probable malate:quinone oxidoreductase">
    <location>
        <begin position="1"/>
        <end position="527"/>
    </location>
</feature>
<reference key="1">
    <citation type="submission" date="2009-07" db="EMBL/GenBank/DDBJ databases">
        <title>Complete sequence of Pectobacterium carotovorum subsp. carotovorum PC1.</title>
        <authorList>
            <consortium name="US DOE Joint Genome Institute"/>
            <person name="Lucas S."/>
            <person name="Copeland A."/>
            <person name="Lapidus A."/>
            <person name="Glavina del Rio T."/>
            <person name="Tice H."/>
            <person name="Bruce D."/>
            <person name="Goodwin L."/>
            <person name="Pitluck S."/>
            <person name="Munk A.C."/>
            <person name="Brettin T."/>
            <person name="Detter J.C."/>
            <person name="Han C."/>
            <person name="Tapia R."/>
            <person name="Larimer F."/>
            <person name="Land M."/>
            <person name="Hauser L."/>
            <person name="Kyrpides N."/>
            <person name="Mikhailova N."/>
            <person name="Balakrishnan V."/>
            <person name="Glasner J."/>
            <person name="Perna N.T."/>
        </authorList>
    </citation>
    <scope>NUCLEOTIDE SEQUENCE [LARGE SCALE GENOMIC DNA]</scope>
    <source>
        <strain>PC1</strain>
    </source>
</reference>
<evidence type="ECO:0000255" key="1">
    <source>
        <dbReference type="HAMAP-Rule" id="MF_00212"/>
    </source>
</evidence>
<accession>C6DAM1</accession>
<proteinExistence type="inferred from homology"/>
<dbReference type="EC" id="1.1.5.4" evidence="1"/>
<dbReference type="EMBL" id="CP001657">
    <property type="protein sequence ID" value="ACT13855.1"/>
    <property type="molecule type" value="Genomic_DNA"/>
</dbReference>
<dbReference type="RefSeq" id="WP_015841015.1">
    <property type="nucleotide sequence ID" value="NC_012917.1"/>
</dbReference>
<dbReference type="SMR" id="C6DAM1"/>
<dbReference type="STRING" id="561230.PC1_2825"/>
<dbReference type="KEGG" id="pct:PC1_2825"/>
<dbReference type="eggNOG" id="COG0579">
    <property type="taxonomic scope" value="Bacteria"/>
</dbReference>
<dbReference type="HOGENOM" id="CLU_028151_0_0_6"/>
<dbReference type="OrthoDB" id="9763983at2"/>
<dbReference type="UniPathway" id="UPA00223">
    <property type="reaction ID" value="UER01008"/>
</dbReference>
<dbReference type="Proteomes" id="UP000002736">
    <property type="component" value="Chromosome"/>
</dbReference>
<dbReference type="GO" id="GO:0047545">
    <property type="term" value="F:2-hydroxyglutarate dehydrogenase activity"/>
    <property type="evidence" value="ECO:0007669"/>
    <property type="project" value="TreeGrafter"/>
</dbReference>
<dbReference type="GO" id="GO:0008924">
    <property type="term" value="F:L-malate dehydrogenase (quinone) activity"/>
    <property type="evidence" value="ECO:0007669"/>
    <property type="project" value="UniProtKB-UniRule"/>
</dbReference>
<dbReference type="GO" id="GO:0006099">
    <property type="term" value="P:tricarboxylic acid cycle"/>
    <property type="evidence" value="ECO:0007669"/>
    <property type="project" value="UniProtKB-UniRule"/>
</dbReference>
<dbReference type="Gene3D" id="3.30.9.10">
    <property type="entry name" value="D-Amino Acid Oxidase, subunit A, domain 2"/>
    <property type="match status" value="1"/>
</dbReference>
<dbReference type="Gene3D" id="3.50.50.60">
    <property type="entry name" value="FAD/NAD(P)-binding domain"/>
    <property type="match status" value="1"/>
</dbReference>
<dbReference type="HAMAP" id="MF_00212">
    <property type="entry name" value="MQO"/>
    <property type="match status" value="1"/>
</dbReference>
<dbReference type="InterPro" id="IPR036188">
    <property type="entry name" value="FAD/NAD-bd_sf"/>
</dbReference>
<dbReference type="InterPro" id="IPR006231">
    <property type="entry name" value="MQO"/>
</dbReference>
<dbReference type="NCBIfam" id="TIGR01320">
    <property type="entry name" value="mal_quin_oxido"/>
    <property type="match status" value="1"/>
</dbReference>
<dbReference type="NCBIfam" id="NF003603">
    <property type="entry name" value="PRK05257.1-1"/>
    <property type="match status" value="1"/>
</dbReference>
<dbReference type="NCBIfam" id="NF003605">
    <property type="entry name" value="PRK05257.1-4"/>
    <property type="match status" value="1"/>
</dbReference>
<dbReference type="NCBIfam" id="NF003606">
    <property type="entry name" value="PRK05257.2-1"/>
    <property type="match status" value="1"/>
</dbReference>
<dbReference type="NCBIfam" id="NF003608">
    <property type="entry name" value="PRK05257.2-4"/>
    <property type="match status" value="1"/>
</dbReference>
<dbReference type="NCBIfam" id="NF003609">
    <property type="entry name" value="PRK05257.2-5"/>
    <property type="match status" value="1"/>
</dbReference>
<dbReference type="NCBIfam" id="NF003611">
    <property type="entry name" value="PRK05257.3-2"/>
    <property type="match status" value="1"/>
</dbReference>
<dbReference type="NCBIfam" id="NF009875">
    <property type="entry name" value="PRK13339.1"/>
    <property type="match status" value="1"/>
</dbReference>
<dbReference type="PANTHER" id="PTHR43104">
    <property type="entry name" value="L-2-HYDROXYGLUTARATE DEHYDROGENASE, MITOCHONDRIAL"/>
    <property type="match status" value="1"/>
</dbReference>
<dbReference type="PANTHER" id="PTHR43104:SF2">
    <property type="entry name" value="L-2-HYDROXYGLUTARATE DEHYDROGENASE, MITOCHONDRIAL"/>
    <property type="match status" value="1"/>
</dbReference>
<dbReference type="Pfam" id="PF06039">
    <property type="entry name" value="Mqo"/>
    <property type="match status" value="1"/>
</dbReference>
<dbReference type="SUPFAM" id="SSF51905">
    <property type="entry name" value="FAD/NAD(P)-binding domain"/>
    <property type="match status" value="1"/>
</dbReference>
<keyword id="KW-0274">FAD</keyword>
<keyword id="KW-0285">Flavoprotein</keyword>
<keyword id="KW-0560">Oxidoreductase</keyword>
<keyword id="KW-0816">Tricarboxylic acid cycle</keyword>